<sequence length="325" mass="37305">MNRLGSVQRKMPCVFVTEVKAEPSAKREHQPFKVLATETLSEKALDADVYNAVATEKVDGTCCYVTNYKGQPYLWARLDRKPNKQADKRFKKFLHSKENAKEFHWNTEEDFKPVPECWIPAKEIEKQNGKPVPDENGHIPGWVPVEKNSKQYCWHSSVVSYEFGIALVLRHHPDDPGVLEISAVPLSELLEQTLELIGTNINGNPYGLGSKKYPLHFLTPHGAFQVRNLPTLKHNDLLSWFEGCREGQIEGIVWHCGDGCLIKVHRHHLGLCWPLPDTYMNSKPVIINMNLDKYDCAFDHQSLFNKFSKIDKQKFDRLKDITLDI</sequence>
<protein>
    <recommendedName>
        <fullName>RNA ligase 1</fullName>
        <ecNumber evidence="1">6.5.1.3</ecNumber>
    </recommendedName>
    <alternativeName>
        <fullName>RNA ligase</fullName>
        <shortName>Rnl</shortName>
    </alternativeName>
</protein>
<comment type="function">
    <text evidence="1">Functions as an RNA ligase, in vitro. The ligation reaction entails three nucleotidyl transfer steps. In the first step, the RNA ligase reacts with ATP in the absence of nucleic acid to form a covalent ligase-AMP intermediate and release pyrophosphate. In step 2, the ligase-AMP binds to the nucleic acid and transfers the adenylate to the 5'-PO4 terminus to form an adenylylated intermediate. In step 3, the RNA ligase directs the attack of the 3'-OH on the 5'-phosphoanhydride linkage, resulting in a repaired 3'-5' phosphodiester and release of AMP. Exhibits selectivity for single-stranded RNA substrates and may not have nick-sealing activity on double-stranded DNA-RNA hybrids. May play a role in maintaining RNA integrity under stress conditions, for example in response to reactive oxygen species (ROS).</text>
</comment>
<comment type="catalytic activity">
    <molecule>RNA ligase 1</molecule>
    <reaction evidence="1">
        <text>ATP + (ribonucleotide)n-3'-hydroxyl + 5'-phospho-(ribonucleotide)m = (ribonucleotide)n+m + AMP + diphosphate.</text>
        <dbReference type="EC" id="6.5.1.3"/>
    </reaction>
</comment>
<comment type="cofactor">
    <cofactor evidence="1">
        <name>Mg(2+)</name>
        <dbReference type="ChEBI" id="CHEBI:18420"/>
    </cofactor>
    <cofactor evidence="1">
        <name>Mn(2+)</name>
        <dbReference type="ChEBI" id="CHEBI:29035"/>
    </cofactor>
</comment>
<comment type="PTM">
    <text evidence="1">AMPylates itself (auto-AMPylation).</text>
</comment>
<comment type="sequence caution" evidence="2">
    <conflict type="frameshift">
        <sequence resource="EMBL-CDS" id="AAH79461"/>
    </conflict>
</comment>
<feature type="chain" id="PRO_0000305275" description="RNA ligase 1">
    <location>
        <begin position="1"/>
        <end position="325"/>
    </location>
</feature>
<organism>
    <name type="scientific">Rattus norvegicus</name>
    <name type="common">Rat</name>
    <dbReference type="NCBI Taxonomy" id="10116"/>
    <lineage>
        <taxon>Eukaryota</taxon>
        <taxon>Metazoa</taxon>
        <taxon>Chordata</taxon>
        <taxon>Craniata</taxon>
        <taxon>Vertebrata</taxon>
        <taxon>Euteleostomi</taxon>
        <taxon>Mammalia</taxon>
        <taxon>Eutheria</taxon>
        <taxon>Euarchontoglires</taxon>
        <taxon>Glires</taxon>
        <taxon>Rodentia</taxon>
        <taxon>Myomorpha</taxon>
        <taxon>Muroidea</taxon>
        <taxon>Muridae</taxon>
        <taxon>Murinae</taxon>
        <taxon>Rattus</taxon>
    </lineage>
</organism>
<accession>Q6AXM9</accession>
<keyword id="KW-0067">ATP-binding</keyword>
<keyword id="KW-0436">Ligase</keyword>
<keyword id="KW-0547">Nucleotide-binding</keyword>
<keyword id="KW-1185">Reference proteome</keyword>
<keyword id="KW-0692">RNA repair</keyword>
<reference key="1">
    <citation type="journal article" date="2004" name="Genome Res.">
        <title>The status, quality, and expansion of the NIH full-length cDNA project: the Mammalian Gene Collection (MGC).</title>
        <authorList>
            <consortium name="The MGC Project Team"/>
        </authorList>
    </citation>
    <scope>NUCLEOTIDE SEQUENCE [LARGE SCALE MRNA]</scope>
    <source>
        <tissue>Lung</tissue>
    </source>
</reference>
<evidence type="ECO:0000250" key="1">
    <source>
        <dbReference type="UniProtKB" id="Q8N999"/>
    </source>
</evidence>
<evidence type="ECO:0000305" key="2"/>
<dbReference type="EC" id="6.5.1.3" evidence="1"/>
<dbReference type="EMBL" id="BC079461">
    <property type="protein sequence ID" value="AAH79461.1"/>
    <property type="status" value="ALT_FRAME"/>
    <property type="molecule type" value="mRNA"/>
</dbReference>
<dbReference type="RefSeq" id="NP_001014105.2">
    <property type="nucleotide sequence ID" value="NM_001014083.2"/>
</dbReference>
<dbReference type="FunCoup" id="Q6AXM9">
    <property type="interactions" value="1819"/>
</dbReference>
<dbReference type="STRING" id="10116.ENSRNOP00000030713"/>
<dbReference type="iPTMnet" id="Q6AXM9"/>
<dbReference type="PhosphoSitePlus" id="Q6AXM9"/>
<dbReference type="PaxDb" id="10116-ENSRNOP00000030713"/>
<dbReference type="GeneID" id="314788"/>
<dbReference type="KEGG" id="rno:314788"/>
<dbReference type="UCSC" id="RGD:1307947">
    <property type="organism name" value="rat"/>
</dbReference>
<dbReference type="AGR" id="RGD:1307947"/>
<dbReference type="CTD" id="91298"/>
<dbReference type="RGD" id="1307947">
    <property type="gene designation" value="RGD1307947"/>
</dbReference>
<dbReference type="VEuPathDB" id="HostDB:ENSRNOG00000006973"/>
<dbReference type="eggNOG" id="ENOG502QWBV">
    <property type="taxonomic scope" value="Eukaryota"/>
</dbReference>
<dbReference type="HOGENOM" id="CLU_074918_0_0_1"/>
<dbReference type="InParanoid" id="Q6AXM9"/>
<dbReference type="OrthoDB" id="1167at9989"/>
<dbReference type="PhylomeDB" id="Q6AXM9"/>
<dbReference type="TreeFam" id="TF328501"/>
<dbReference type="PRO" id="PR:Q6AXM9"/>
<dbReference type="Proteomes" id="UP000002494">
    <property type="component" value="Chromosome 7"/>
</dbReference>
<dbReference type="Bgee" id="ENSRNOG00000006973">
    <property type="expression patterns" value="Expressed in cerebellum and 19 other cell types or tissues"/>
</dbReference>
<dbReference type="ExpressionAtlas" id="Q6AXM9">
    <property type="expression patterns" value="baseline and differential"/>
</dbReference>
<dbReference type="GO" id="GO:0005524">
    <property type="term" value="F:ATP binding"/>
    <property type="evidence" value="ECO:0007669"/>
    <property type="project" value="UniProtKB-KW"/>
</dbReference>
<dbReference type="GO" id="GO:0003972">
    <property type="term" value="F:RNA ligase (ATP) activity"/>
    <property type="evidence" value="ECO:0000266"/>
    <property type="project" value="RGD"/>
</dbReference>
<dbReference type="GO" id="GO:0002244">
    <property type="term" value="P:hematopoietic progenitor cell differentiation"/>
    <property type="evidence" value="ECO:0000266"/>
    <property type="project" value="RGD"/>
</dbReference>
<dbReference type="GO" id="GO:0000302">
    <property type="term" value="P:response to reactive oxygen species"/>
    <property type="evidence" value="ECO:0000266"/>
    <property type="project" value="RGD"/>
</dbReference>
<dbReference type="GO" id="GO:0042245">
    <property type="term" value="P:RNA repair"/>
    <property type="evidence" value="ECO:0007669"/>
    <property type="project" value="UniProtKB-KW"/>
</dbReference>
<dbReference type="InterPro" id="IPR041211">
    <property type="entry name" value="RLIG1"/>
</dbReference>
<dbReference type="PANTHER" id="PTHR31219">
    <property type="entry name" value="CHROMOSOME 28 C12ORF29 HOMOLOG"/>
    <property type="match status" value="1"/>
</dbReference>
<dbReference type="PANTHER" id="PTHR31219:SF2">
    <property type="entry name" value="RNA LIGASE 1"/>
    <property type="match status" value="1"/>
</dbReference>
<dbReference type="Pfam" id="PF17720">
    <property type="entry name" value="RLIG1"/>
    <property type="match status" value="1"/>
</dbReference>
<proteinExistence type="evidence at transcript level"/>
<name>RLIG1_RAT</name>